<proteinExistence type="inferred from homology"/>
<protein>
    <recommendedName>
        <fullName evidence="1">Small ribosomal subunit protein bS16</fullName>
    </recommendedName>
    <alternativeName>
        <fullName evidence="3">30S ribosomal protein S16</fullName>
    </alternativeName>
</protein>
<name>RS16_BRASB</name>
<dbReference type="EMBL" id="CP000494">
    <property type="protein sequence ID" value="ABQ32654.1"/>
    <property type="molecule type" value="Genomic_DNA"/>
</dbReference>
<dbReference type="RefSeq" id="WP_008964221.1">
    <property type="nucleotide sequence ID" value="NC_009485.1"/>
</dbReference>
<dbReference type="SMR" id="A5E910"/>
<dbReference type="STRING" id="288000.BBta_0367"/>
<dbReference type="KEGG" id="bbt:BBta_0367"/>
<dbReference type="eggNOG" id="COG0228">
    <property type="taxonomic scope" value="Bacteria"/>
</dbReference>
<dbReference type="HOGENOM" id="CLU_100590_3_1_5"/>
<dbReference type="OrthoDB" id="9807878at2"/>
<dbReference type="Proteomes" id="UP000000246">
    <property type="component" value="Chromosome"/>
</dbReference>
<dbReference type="GO" id="GO:0005737">
    <property type="term" value="C:cytoplasm"/>
    <property type="evidence" value="ECO:0007669"/>
    <property type="project" value="UniProtKB-ARBA"/>
</dbReference>
<dbReference type="GO" id="GO:0015935">
    <property type="term" value="C:small ribosomal subunit"/>
    <property type="evidence" value="ECO:0007669"/>
    <property type="project" value="TreeGrafter"/>
</dbReference>
<dbReference type="GO" id="GO:0003735">
    <property type="term" value="F:structural constituent of ribosome"/>
    <property type="evidence" value="ECO:0007669"/>
    <property type="project" value="InterPro"/>
</dbReference>
<dbReference type="GO" id="GO:0006412">
    <property type="term" value="P:translation"/>
    <property type="evidence" value="ECO:0007669"/>
    <property type="project" value="UniProtKB-UniRule"/>
</dbReference>
<dbReference type="FunFam" id="3.30.1320.10:FF:000008">
    <property type="entry name" value="30S ribosomal protein S16"/>
    <property type="match status" value="1"/>
</dbReference>
<dbReference type="Gene3D" id="3.30.1320.10">
    <property type="match status" value="1"/>
</dbReference>
<dbReference type="HAMAP" id="MF_00385">
    <property type="entry name" value="Ribosomal_bS16"/>
    <property type="match status" value="1"/>
</dbReference>
<dbReference type="InterPro" id="IPR000307">
    <property type="entry name" value="Ribosomal_bS16"/>
</dbReference>
<dbReference type="InterPro" id="IPR023803">
    <property type="entry name" value="Ribosomal_bS16_dom_sf"/>
</dbReference>
<dbReference type="NCBIfam" id="TIGR00002">
    <property type="entry name" value="S16"/>
    <property type="match status" value="1"/>
</dbReference>
<dbReference type="PANTHER" id="PTHR12919">
    <property type="entry name" value="30S RIBOSOMAL PROTEIN S16"/>
    <property type="match status" value="1"/>
</dbReference>
<dbReference type="PANTHER" id="PTHR12919:SF20">
    <property type="entry name" value="SMALL RIBOSOMAL SUBUNIT PROTEIN BS16M"/>
    <property type="match status" value="1"/>
</dbReference>
<dbReference type="Pfam" id="PF00886">
    <property type="entry name" value="Ribosomal_S16"/>
    <property type="match status" value="1"/>
</dbReference>
<dbReference type="SUPFAM" id="SSF54565">
    <property type="entry name" value="Ribosomal protein S16"/>
    <property type="match status" value="1"/>
</dbReference>
<organism>
    <name type="scientific">Bradyrhizobium sp. (strain BTAi1 / ATCC BAA-1182)</name>
    <dbReference type="NCBI Taxonomy" id="288000"/>
    <lineage>
        <taxon>Bacteria</taxon>
        <taxon>Pseudomonadati</taxon>
        <taxon>Pseudomonadota</taxon>
        <taxon>Alphaproteobacteria</taxon>
        <taxon>Hyphomicrobiales</taxon>
        <taxon>Nitrobacteraceae</taxon>
        <taxon>Bradyrhizobium</taxon>
    </lineage>
</organism>
<feature type="chain" id="PRO_1000049219" description="Small ribosomal subunit protein bS16">
    <location>
        <begin position="1"/>
        <end position="110"/>
    </location>
</feature>
<feature type="region of interest" description="Disordered" evidence="2">
    <location>
        <begin position="87"/>
        <end position="110"/>
    </location>
</feature>
<gene>
    <name evidence="1" type="primary">rpsP</name>
    <name type="ordered locus">BBta_0367</name>
</gene>
<keyword id="KW-1185">Reference proteome</keyword>
<keyword id="KW-0687">Ribonucleoprotein</keyword>
<keyword id="KW-0689">Ribosomal protein</keyword>
<accession>A5E910</accession>
<evidence type="ECO:0000255" key="1">
    <source>
        <dbReference type="HAMAP-Rule" id="MF_00385"/>
    </source>
</evidence>
<evidence type="ECO:0000256" key="2">
    <source>
        <dbReference type="SAM" id="MobiDB-lite"/>
    </source>
</evidence>
<evidence type="ECO:0000305" key="3"/>
<reference key="1">
    <citation type="journal article" date="2007" name="Science">
        <title>Legumes symbioses: absence of nod genes in photosynthetic bradyrhizobia.</title>
        <authorList>
            <person name="Giraud E."/>
            <person name="Moulin L."/>
            <person name="Vallenet D."/>
            <person name="Barbe V."/>
            <person name="Cytryn E."/>
            <person name="Avarre J.-C."/>
            <person name="Jaubert M."/>
            <person name="Simon D."/>
            <person name="Cartieaux F."/>
            <person name="Prin Y."/>
            <person name="Bena G."/>
            <person name="Hannibal L."/>
            <person name="Fardoux J."/>
            <person name="Kojadinovic M."/>
            <person name="Vuillet L."/>
            <person name="Lajus A."/>
            <person name="Cruveiller S."/>
            <person name="Rouy Z."/>
            <person name="Mangenot S."/>
            <person name="Segurens B."/>
            <person name="Dossat C."/>
            <person name="Franck W.L."/>
            <person name="Chang W.-S."/>
            <person name="Saunders E."/>
            <person name="Bruce D."/>
            <person name="Richardson P."/>
            <person name="Normand P."/>
            <person name="Dreyfus B."/>
            <person name="Pignol D."/>
            <person name="Stacey G."/>
            <person name="Emerich D."/>
            <person name="Vermeglio A."/>
            <person name="Medigue C."/>
            <person name="Sadowsky M."/>
        </authorList>
    </citation>
    <scope>NUCLEOTIDE SEQUENCE [LARGE SCALE GENOMIC DNA]</scope>
    <source>
        <strain>BTAi1 / ATCC BAA-1182</strain>
    </source>
</reference>
<comment type="similarity">
    <text evidence="1">Belongs to the bacterial ribosomal protein bS16 family.</text>
</comment>
<sequence length="110" mass="12397">MSVVIRLARAGTKKRPVYHVVVADSRFPRDGRFIERLGYFNPLMPKDNEARLKLDMEKVKGWLAKGAQPSDRVARFLDAAGVKKREARQNPIKAVPRKERKAQAEAAAKG</sequence>